<keyword id="KW-0002">3D-structure</keyword>
<keyword id="KW-0963">Cytoplasm</keyword>
<keyword id="KW-0378">Hydrolase</keyword>
<keyword id="KW-0520">NAD</keyword>
<keyword id="KW-0554">One-carbon metabolism</keyword>
<keyword id="KW-1185">Reference proteome</keyword>
<reference key="1">
    <citation type="journal article" date="2005" name="Infect. Immun.">
        <title>Whole-genome analyses of speciation events in pathogenic Brucellae.</title>
        <authorList>
            <person name="Chain P.S."/>
            <person name="Comerci D.J."/>
            <person name="Tolmasky M.E."/>
            <person name="Larimer F.W."/>
            <person name="Malfatti S.A."/>
            <person name="Vergez L.M."/>
            <person name="Aguero F."/>
            <person name="Land M.L."/>
            <person name="Ugalde R.A."/>
            <person name="Garcia E."/>
        </authorList>
    </citation>
    <scope>NUCLEOTIDE SEQUENCE [LARGE SCALE GENOMIC DNA]</scope>
    <source>
        <strain>2308</strain>
    </source>
</reference>
<accession>Q2YQX8</accession>
<comment type="function">
    <text evidence="1">May play a key role in the regulation of the intracellular concentration of adenosylhomocysteine.</text>
</comment>
<comment type="catalytic activity">
    <reaction evidence="1">
        <text>S-adenosyl-L-homocysteine + H2O = L-homocysteine + adenosine</text>
        <dbReference type="Rhea" id="RHEA:21708"/>
        <dbReference type="ChEBI" id="CHEBI:15377"/>
        <dbReference type="ChEBI" id="CHEBI:16335"/>
        <dbReference type="ChEBI" id="CHEBI:57856"/>
        <dbReference type="ChEBI" id="CHEBI:58199"/>
        <dbReference type="EC" id="3.13.2.1"/>
    </reaction>
</comment>
<comment type="cofactor">
    <cofactor evidence="1">
        <name>NAD(+)</name>
        <dbReference type="ChEBI" id="CHEBI:57540"/>
    </cofactor>
    <text evidence="1">Binds 1 NAD(+) per subunit.</text>
</comment>
<comment type="pathway">
    <text evidence="1">Amino-acid biosynthesis; L-homocysteine biosynthesis; L-homocysteine from S-adenosyl-L-homocysteine: step 1/1.</text>
</comment>
<comment type="subcellular location">
    <subcellularLocation>
        <location evidence="1">Cytoplasm</location>
    </subcellularLocation>
</comment>
<comment type="similarity">
    <text evidence="1">Belongs to the adenosylhomocysteinase family.</text>
</comment>
<name>SAHH_BRUA2</name>
<protein>
    <recommendedName>
        <fullName evidence="1">Adenosylhomocysteinase</fullName>
        <ecNumber evidence="1">3.13.2.1</ecNumber>
    </recommendedName>
    <alternativeName>
        <fullName evidence="1">S-adenosyl-L-homocysteine hydrolase</fullName>
        <shortName evidence="1">AdoHcyase</shortName>
    </alternativeName>
</protein>
<dbReference type="EC" id="3.13.2.1" evidence="1"/>
<dbReference type="EMBL" id="AM040264">
    <property type="protein sequence ID" value="CAJ12055.1"/>
    <property type="molecule type" value="Genomic_DNA"/>
</dbReference>
<dbReference type="RefSeq" id="WP_002965162.1">
    <property type="nucleotide sequence ID" value="NZ_KN046823.1"/>
</dbReference>
<dbReference type="PDB" id="3N58">
    <property type="method" value="X-ray"/>
    <property type="resolution" value="2.39 A"/>
    <property type="chains" value="A/B/C/D=8-466"/>
</dbReference>
<dbReference type="PDBsum" id="3N58"/>
<dbReference type="SMR" id="Q2YQX8"/>
<dbReference type="STRING" id="359391.BAB1_2099"/>
<dbReference type="GeneID" id="97534642"/>
<dbReference type="KEGG" id="bmf:BAB1_2099"/>
<dbReference type="PATRIC" id="fig|359391.11.peg.1331"/>
<dbReference type="HOGENOM" id="CLU_025194_2_0_5"/>
<dbReference type="PhylomeDB" id="Q2YQX8"/>
<dbReference type="UniPathway" id="UPA00314">
    <property type="reaction ID" value="UER00076"/>
</dbReference>
<dbReference type="EvolutionaryTrace" id="Q2YQX8"/>
<dbReference type="Proteomes" id="UP000002719">
    <property type="component" value="Chromosome I"/>
</dbReference>
<dbReference type="GO" id="GO:0005829">
    <property type="term" value="C:cytosol"/>
    <property type="evidence" value="ECO:0007669"/>
    <property type="project" value="TreeGrafter"/>
</dbReference>
<dbReference type="GO" id="GO:0004013">
    <property type="term" value="F:adenosylhomocysteinase activity"/>
    <property type="evidence" value="ECO:0007669"/>
    <property type="project" value="UniProtKB-UniRule"/>
</dbReference>
<dbReference type="GO" id="GO:0071269">
    <property type="term" value="P:L-homocysteine biosynthetic process"/>
    <property type="evidence" value="ECO:0007669"/>
    <property type="project" value="UniProtKB-UniRule"/>
</dbReference>
<dbReference type="GO" id="GO:0006730">
    <property type="term" value="P:one-carbon metabolic process"/>
    <property type="evidence" value="ECO:0007669"/>
    <property type="project" value="UniProtKB-KW"/>
</dbReference>
<dbReference type="GO" id="GO:0033353">
    <property type="term" value="P:S-adenosylmethionine cycle"/>
    <property type="evidence" value="ECO:0007669"/>
    <property type="project" value="TreeGrafter"/>
</dbReference>
<dbReference type="CDD" id="cd00401">
    <property type="entry name" value="SAHH"/>
    <property type="match status" value="1"/>
</dbReference>
<dbReference type="FunFam" id="3.40.50.720:FF:000004">
    <property type="entry name" value="Adenosylhomocysteinase"/>
    <property type="match status" value="1"/>
</dbReference>
<dbReference type="Gene3D" id="3.40.50.1480">
    <property type="entry name" value="Adenosylhomocysteinase-like"/>
    <property type="match status" value="1"/>
</dbReference>
<dbReference type="Gene3D" id="3.40.50.720">
    <property type="entry name" value="NAD(P)-binding Rossmann-like Domain"/>
    <property type="match status" value="1"/>
</dbReference>
<dbReference type="HAMAP" id="MF_00563">
    <property type="entry name" value="AdoHcyase"/>
    <property type="match status" value="1"/>
</dbReference>
<dbReference type="InterPro" id="IPR042172">
    <property type="entry name" value="Adenosylhomocyst_ase-like_sf"/>
</dbReference>
<dbReference type="InterPro" id="IPR000043">
    <property type="entry name" value="Adenosylhomocysteinase-like"/>
</dbReference>
<dbReference type="InterPro" id="IPR015878">
    <property type="entry name" value="Ado_hCys_hydrolase_NAD-bd"/>
</dbReference>
<dbReference type="InterPro" id="IPR036291">
    <property type="entry name" value="NAD(P)-bd_dom_sf"/>
</dbReference>
<dbReference type="InterPro" id="IPR020082">
    <property type="entry name" value="S-Ado-L-homoCys_hydrolase_CS"/>
</dbReference>
<dbReference type="NCBIfam" id="TIGR00936">
    <property type="entry name" value="ahcY"/>
    <property type="match status" value="1"/>
</dbReference>
<dbReference type="NCBIfam" id="NF004005">
    <property type="entry name" value="PRK05476.2-3"/>
    <property type="match status" value="1"/>
</dbReference>
<dbReference type="PANTHER" id="PTHR23420">
    <property type="entry name" value="ADENOSYLHOMOCYSTEINASE"/>
    <property type="match status" value="1"/>
</dbReference>
<dbReference type="PANTHER" id="PTHR23420:SF0">
    <property type="entry name" value="ADENOSYLHOMOCYSTEINASE"/>
    <property type="match status" value="1"/>
</dbReference>
<dbReference type="Pfam" id="PF05221">
    <property type="entry name" value="AdoHcyase"/>
    <property type="match status" value="1"/>
</dbReference>
<dbReference type="Pfam" id="PF00670">
    <property type="entry name" value="AdoHcyase_NAD"/>
    <property type="match status" value="1"/>
</dbReference>
<dbReference type="PIRSF" id="PIRSF001109">
    <property type="entry name" value="Ad_hcy_hydrolase"/>
    <property type="match status" value="1"/>
</dbReference>
<dbReference type="SMART" id="SM00996">
    <property type="entry name" value="AdoHcyase"/>
    <property type="match status" value="1"/>
</dbReference>
<dbReference type="SMART" id="SM00997">
    <property type="entry name" value="AdoHcyase_NAD"/>
    <property type="match status" value="1"/>
</dbReference>
<dbReference type="SUPFAM" id="SSF52283">
    <property type="entry name" value="Formate/glycerate dehydrogenase catalytic domain-like"/>
    <property type="match status" value="1"/>
</dbReference>
<dbReference type="SUPFAM" id="SSF51735">
    <property type="entry name" value="NAD(P)-binding Rossmann-fold domains"/>
    <property type="match status" value="1"/>
</dbReference>
<dbReference type="PROSITE" id="PS00738">
    <property type="entry name" value="ADOHCYASE_1"/>
    <property type="match status" value="1"/>
</dbReference>
<dbReference type="PROSITE" id="PS00739">
    <property type="entry name" value="ADOHCYASE_2"/>
    <property type="match status" value="1"/>
</dbReference>
<organism>
    <name type="scientific">Brucella abortus (strain 2308)</name>
    <dbReference type="NCBI Taxonomy" id="359391"/>
    <lineage>
        <taxon>Bacteria</taxon>
        <taxon>Pseudomonadati</taxon>
        <taxon>Pseudomonadota</taxon>
        <taxon>Alphaproteobacteria</taxon>
        <taxon>Hyphomicrobiales</taxon>
        <taxon>Brucellaceae</taxon>
        <taxon>Brucella/Ochrobactrum group</taxon>
        <taxon>Brucella</taxon>
    </lineage>
</organism>
<sequence>MTASQDFVVKDISLADWGRKELDIAETEMPGLMAAREEFGKSQPLKGARISGSLHMTIQTAVLIETLKVLGAEVRWASCNIFSTQDHAAAAIAATGTPVFAVKGETLEEYWTYTDQIFQWPDGEPSNMILDDGGDATMYILIGARAEAGEDVLSNPQSEEEEVLFAQIKKRMAATPGFFTKQRAAIKGVTEETTTGVNRLYQLQKKGLLPFPAINVNDSVTKSKFDNKYGCKESLVDGIRRGTDVMMAGKVAVVCGYGDVGKGSAQSLAGAGARVKVTEVDPICALQAAMDGFEVVTLDDAASTADIVVTTTGNKDVITIDHMRKMKDMCIVGNIGHFDNEIQVAALRNLKWTNVKPQVDLIEFPDGKRLILLSEGRLLNLGNATGHPSFVMSASFTNQVLGQIELFTRTDAYKNEVYVLPKHLDEKVARLHLDKLGAKLTVLSEEQAAYIGVTPQGPFKSEHYRY</sequence>
<gene>
    <name evidence="1" type="primary">ahcY</name>
    <name type="ordered locus">BAB1_2099</name>
</gene>
<feature type="chain" id="PRO_1000024711" description="Adenosylhomocysteinase">
    <location>
        <begin position="1"/>
        <end position="466"/>
    </location>
</feature>
<feature type="binding site" evidence="1">
    <location>
        <position position="57"/>
    </location>
    <ligand>
        <name>substrate</name>
    </ligand>
</feature>
<feature type="binding site" evidence="1">
    <location>
        <position position="132"/>
    </location>
    <ligand>
        <name>substrate</name>
    </ligand>
</feature>
<feature type="binding site" evidence="1">
    <location>
        <position position="192"/>
    </location>
    <ligand>
        <name>substrate</name>
    </ligand>
</feature>
<feature type="binding site" evidence="1">
    <location>
        <begin position="193"/>
        <end position="195"/>
    </location>
    <ligand>
        <name>NAD(+)</name>
        <dbReference type="ChEBI" id="CHEBI:57540"/>
    </ligand>
</feature>
<feature type="binding site" evidence="1">
    <location>
        <position position="222"/>
    </location>
    <ligand>
        <name>substrate</name>
    </ligand>
</feature>
<feature type="binding site" evidence="1">
    <location>
        <position position="226"/>
    </location>
    <ligand>
        <name>substrate</name>
    </ligand>
</feature>
<feature type="binding site" evidence="1">
    <location>
        <position position="227"/>
    </location>
    <ligand>
        <name>NAD(+)</name>
        <dbReference type="ChEBI" id="CHEBI:57540"/>
    </ligand>
</feature>
<feature type="binding site" evidence="1">
    <location>
        <begin position="256"/>
        <end position="261"/>
    </location>
    <ligand>
        <name>NAD(+)</name>
        <dbReference type="ChEBI" id="CHEBI:57540"/>
    </ligand>
</feature>
<feature type="binding site" evidence="1">
    <location>
        <position position="279"/>
    </location>
    <ligand>
        <name>NAD(+)</name>
        <dbReference type="ChEBI" id="CHEBI:57540"/>
    </ligand>
</feature>
<feature type="binding site" evidence="1">
    <location>
        <position position="314"/>
    </location>
    <ligand>
        <name>NAD(+)</name>
        <dbReference type="ChEBI" id="CHEBI:57540"/>
    </ligand>
</feature>
<feature type="binding site" evidence="1">
    <location>
        <begin position="335"/>
        <end position="337"/>
    </location>
    <ligand>
        <name>NAD(+)</name>
        <dbReference type="ChEBI" id="CHEBI:57540"/>
    </ligand>
</feature>
<feature type="binding site" evidence="1">
    <location>
        <position position="380"/>
    </location>
    <ligand>
        <name>NAD(+)</name>
        <dbReference type="ChEBI" id="CHEBI:57540"/>
    </ligand>
</feature>
<feature type="strand" evidence="2">
    <location>
        <begin position="8"/>
        <end position="10"/>
    </location>
</feature>
<feature type="helix" evidence="2">
    <location>
        <begin position="12"/>
        <end position="14"/>
    </location>
</feature>
<feature type="helix" evidence="2">
    <location>
        <begin position="15"/>
        <end position="26"/>
    </location>
</feature>
<feature type="helix" evidence="2">
    <location>
        <begin position="30"/>
        <end position="39"/>
    </location>
</feature>
<feature type="turn" evidence="2">
    <location>
        <begin position="40"/>
        <end position="42"/>
    </location>
</feature>
<feature type="turn" evidence="2">
    <location>
        <begin position="44"/>
        <end position="47"/>
    </location>
</feature>
<feature type="strand" evidence="2">
    <location>
        <begin position="49"/>
        <end position="54"/>
    </location>
</feature>
<feature type="helix" evidence="2">
    <location>
        <begin position="58"/>
        <end position="69"/>
    </location>
</feature>
<feature type="strand" evidence="2">
    <location>
        <begin position="73"/>
        <end position="77"/>
    </location>
</feature>
<feature type="helix" evidence="2">
    <location>
        <begin position="86"/>
        <end position="94"/>
    </location>
</feature>
<feature type="strand" evidence="2">
    <location>
        <begin position="99"/>
        <end position="101"/>
    </location>
</feature>
<feature type="helix" evidence="2">
    <location>
        <begin position="107"/>
        <end position="116"/>
    </location>
</feature>
<feature type="strand" evidence="2">
    <location>
        <begin position="127"/>
        <end position="134"/>
    </location>
</feature>
<feature type="helix" evidence="2">
    <location>
        <begin position="135"/>
        <end position="147"/>
    </location>
</feature>
<feature type="strand" evidence="2">
    <location>
        <begin position="153"/>
        <end position="155"/>
    </location>
</feature>
<feature type="helix" evidence="2">
    <location>
        <begin position="159"/>
        <end position="174"/>
    </location>
</feature>
<feature type="helix" evidence="2">
    <location>
        <begin position="178"/>
        <end position="185"/>
    </location>
</feature>
<feature type="strand" evidence="2">
    <location>
        <begin position="188"/>
        <end position="191"/>
    </location>
</feature>
<feature type="helix" evidence="2">
    <location>
        <begin position="194"/>
        <end position="206"/>
    </location>
</feature>
<feature type="strand" evidence="2">
    <location>
        <begin position="213"/>
        <end position="215"/>
    </location>
</feature>
<feature type="helix" evidence="2">
    <location>
        <begin position="220"/>
        <end position="223"/>
    </location>
</feature>
<feature type="helix" evidence="2">
    <location>
        <begin position="226"/>
        <end position="243"/>
    </location>
</feature>
<feature type="strand" evidence="2">
    <location>
        <begin position="251"/>
        <end position="255"/>
    </location>
</feature>
<feature type="helix" evidence="2">
    <location>
        <begin position="259"/>
        <end position="270"/>
    </location>
</feature>
<feature type="strand" evidence="2">
    <location>
        <begin position="274"/>
        <end position="278"/>
    </location>
</feature>
<feature type="helix" evidence="2">
    <location>
        <begin position="282"/>
        <end position="290"/>
    </location>
</feature>
<feature type="helix" evidence="2">
    <location>
        <begin position="298"/>
        <end position="301"/>
    </location>
</feature>
<feature type="helix" evidence="2">
    <location>
        <begin position="302"/>
        <end position="304"/>
    </location>
</feature>
<feature type="strand" evidence="2">
    <location>
        <begin position="306"/>
        <end position="310"/>
    </location>
</feature>
<feature type="strand" evidence="2">
    <location>
        <begin position="313"/>
        <end position="318"/>
    </location>
</feature>
<feature type="helix" evidence="2">
    <location>
        <begin position="320"/>
        <end position="325"/>
    </location>
</feature>
<feature type="strand" evidence="2">
    <location>
        <begin position="330"/>
        <end position="334"/>
    </location>
</feature>
<feature type="strand" evidence="2">
    <location>
        <begin position="336"/>
        <end position="338"/>
    </location>
</feature>
<feature type="turn" evidence="2">
    <location>
        <begin position="339"/>
        <end position="341"/>
    </location>
</feature>
<feature type="helix" evidence="2">
    <location>
        <begin position="345"/>
        <end position="347"/>
    </location>
</feature>
<feature type="strand" evidence="2">
    <location>
        <begin position="350"/>
        <end position="356"/>
    </location>
</feature>
<feature type="strand" evidence="2">
    <location>
        <begin position="359"/>
        <end position="363"/>
    </location>
</feature>
<feature type="strand" evidence="2">
    <location>
        <begin position="369"/>
        <end position="373"/>
    </location>
</feature>
<feature type="helix" evidence="2">
    <location>
        <begin position="374"/>
        <end position="376"/>
    </location>
</feature>
<feature type="helix" evidence="2">
    <location>
        <begin position="379"/>
        <end position="383"/>
    </location>
</feature>
<feature type="helix" evidence="2">
    <location>
        <begin position="389"/>
        <end position="408"/>
    </location>
</feature>
<feature type="helix" evidence="2">
    <location>
        <begin position="410"/>
        <end position="412"/>
    </location>
</feature>
<feature type="strand" evidence="2">
    <location>
        <begin position="415"/>
        <end position="418"/>
    </location>
</feature>
<feature type="helix" evidence="2">
    <location>
        <begin position="422"/>
        <end position="432"/>
    </location>
</feature>
<feature type="helix" evidence="2">
    <location>
        <begin position="434"/>
        <end position="436"/>
    </location>
</feature>
<feature type="helix" evidence="2">
    <location>
        <begin position="445"/>
        <end position="451"/>
    </location>
</feature>
<evidence type="ECO:0000255" key="1">
    <source>
        <dbReference type="HAMAP-Rule" id="MF_00563"/>
    </source>
</evidence>
<evidence type="ECO:0007829" key="2">
    <source>
        <dbReference type="PDB" id="3N58"/>
    </source>
</evidence>
<proteinExistence type="evidence at protein level"/>